<protein>
    <recommendedName>
        <fullName evidence="1">Enolase</fullName>
        <ecNumber evidence="1">4.2.1.11</ecNumber>
    </recommendedName>
    <alternativeName>
        <fullName evidence="1">2-phospho-D-glycerate hydro-lyase</fullName>
    </alternativeName>
    <alternativeName>
        <fullName evidence="1">2-phosphoglycerate dehydratase</fullName>
    </alternativeName>
</protein>
<comment type="function">
    <text evidence="1">Catalyzes the reversible conversion of 2-phosphoglycerate (2-PG) into phosphoenolpyruvate (PEP). It is essential for the degradation of carbohydrates via glycolysis.</text>
</comment>
<comment type="catalytic activity">
    <reaction evidence="1">
        <text>(2R)-2-phosphoglycerate = phosphoenolpyruvate + H2O</text>
        <dbReference type="Rhea" id="RHEA:10164"/>
        <dbReference type="ChEBI" id="CHEBI:15377"/>
        <dbReference type="ChEBI" id="CHEBI:58289"/>
        <dbReference type="ChEBI" id="CHEBI:58702"/>
        <dbReference type="EC" id="4.2.1.11"/>
    </reaction>
</comment>
<comment type="cofactor">
    <cofactor evidence="1">
        <name>Mg(2+)</name>
        <dbReference type="ChEBI" id="CHEBI:18420"/>
    </cofactor>
    <text evidence="1">Binds a second Mg(2+) ion via substrate during catalysis.</text>
</comment>
<comment type="pathway">
    <text evidence="1">Carbohydrate degradation; glycolysis; pyruvate from D-glyceraldehyde 3-phosphate: step 4/5.</text>
</comment>
<comment type="subcellular location">
    <subcellularLocation>
        <location evidence="1">Cytoplasm</location>
    </subcellularLocation>
    <subcellularLocation>
        <location evidence="1">Secreted</location>
    </subcellularLocation>
    <subcellularLocation>
        <location evidence="1">Cell surface</location>
    </subcellularLocation>
    <text evidence="1">Fractions of enolase are present in both the cytoplasm and on the cell surface.</text>
</comment>
<comment type="similarity">
    <text evidence="1">Belongs to the enolase family.</text>
</comment>
<name>ENO_RHOBA</name>
<gene>
    <name evidence="1" type="primary">eno</name>
    <name type="ordered locus">RB12381</name>
</gene>
<evidence type="ECO:0000255" key="1">
    <source>
        <dbReference type="HAMAP-Rule" id="MF_00318"/>
    </source>
</evidence>
<proteinExistence type="inferred from homology"/>
<sequence length="428" mass="45895">MTLIESIHARQILDSRGNPTVECEVTLMDGAAGRAAVPSGASTGMHEAWELRDGDKSVFMGKGVTTAVKNVNTKIADALEGMDATDQAAVDQAMIELDGTPNKKELGANAILGVSLAVAHAAAASTNQPLFRYLGGAGARMLPAPMMNIINGGEHADNGVDIQEFMVMPLGFERFSDALRCGTEIFHNLKKVLSDKGYSTAVGDEGGFAPDLKSNQEALDVIMTAIDKAGYKAGEQVWIALDAASTEFYDKSSGKYSLDNNQMSGDEMVDFLAGWCDKYPICSIEDGCDEDDWETWKKLTTKIGDKVQLVGDDLFVTNVERLQRGIDEGIANSILIKVNQIGTMTETIDAIQLAHRNGYTSISSHRSGETEDSTIADLAVAMSTGQIKTGSASRSDRMAKYNQLLRIEELLGDAAQYGGPLFAKRITG</sequence>
<dbReference type="EC" id="4.2.1.11" evidence="1"/>
<dbReference type="EMBL" id="BX294155">
    <property type="protein sequence ID" value="CAD77550.1"/>
    <property type="molecule type" value="Genomic_DNA"/>
</dbReference>
<dbReference type="RefSeq" id="NP_870473.1">
    <property type="nucleotide sequence ID" value="NC_005027.1"/>
</dbReference>
<dbReference type="RefSeq" id="WP_011123706.1">
    <property type="nucleotide sequence ID" value="NC_005027.1"/>
</dbReference>
<dbReference type="SMR" id="Q7UIR2"/>
<dbReference type="FunCoup" id="Q7UIR2">
    <property type="interactions" value="479"/>
</dbReference>
<dbReference type="STRING" id="243090.RB12381"/>
<dbReference type="EnsemblBacteria" id="CAD77550">
    <property type="protein sequence ID" value="CAD77550"/>
    <property type="gene ID" value="RB12381"/>
</dbReference>
<dbReference type="KEGG" id="rba:RB12381"/>
<dbReference type="PATRIC" id="fig|243090.15.peg.5986"/>
<dbReference type="eggNOG" id="COG0148">
    <property type="taxonomic scope" value="Bacteria"/>
</dbReference>
<dbReference type="HOGENOM" id="CLU_031223_2_1_0"/>
<dbReference type="InParanoid" id="Q7UIR2"/>
<dbReference type="OrthoDB" id="9804716at2"/>
<dbReference type="UniPathway" id="UPA00109">
    <property type="reaction ID" value="UER00187"/>
</dbReference>
<dbReference type="Proteomes" id="UP000001025">
    <property type="component" value="Chromosome"/>
</dbReference>
<dbReference type="GO" id="GO:0009986">
    <property type="term" value="C:cell surface"/>
    <property type="evidence" value="ECO:0007669"/>
    <property type="project" value="UniProtKB-SubCell"/>
</dbReference>
<dbReference type="GO" id="GO:0005576">
    <property type="term" value="C:extracellular region"/>
    <property type="evidence" value="ECO:0007669"/>
    <property type="project" value="UniProtKB-SubCell"/>
</dbReference>
<dbReference type="GO" id="GO:0000015">
    <property type="term" value="C:phosphopyruvate hydratase complex"/>
    <property type="evidence" value="ECO:0000318"/>
    <property type="project" value="GO_Central"/>
</dbReference>
<dbReference type="GO" id="GO:0000287">
    <property type="term" value="F:magnesium ion binding"/>
    <property type="evidence" value="ECO:0007669"/>
    <property type="project" value="UniProtKB-UniRule"/>
</dbReference>
<dbReference type="GO" id="GO:0004634">
    <property type="term" value="F:phosphopyruvate hydratase activity"/>
    <property type="evidence" value="ECO:0000318"/>
    <property type="project" value="GO_Central"/>
</dbReference>
<dbReference type="GO" id="GO:0006096">
    <property type="term" value="P:glycolytic process"/>
    <property type="evidence" value="ECO:0000318"/>
    <property type="project" value="GO_Central"/>
</dbReference>
<dbReference type="CDD" id="cd03313">
    <property type="entry name" value="enolase"/>
    <property type="match status" value="1"/>
</dbReference>
<dbReference type="FunFam" id="3.20.20.120:FF:000001">
    <property type="entry name" value="Enolase"/>
    <property type="match status" value="1"/>
</dbReference>
<dbReference type="FunFam" id="3.30.390.10:FF:000001">
    <property type="entry name" value="Enolase"/>
    <property type="match status" value="1"/>
</dbReference>
<dbReference type="Gene3D" id="3.20.20.120">
    <property type="entry name" value="Enolase-like C-terminal domain"/>
    <property type="match status" value="1"/>
</dbReference>
<dbReference type="Gene3D" id="3.30.390.10">
    <property type="entry name" value="Enolase-like, N-terminal domain"/>
    <property type="match status" value="1"/>
</dbReference>
<dbReference type="HAMAP" id="MF_00318">
    <property type="entry name" value="Enolase"/>
    <property type="match status" value="1"/>
</dbReference>
<dbReference type="InterPro" id="IPR000941">
    <property type="entry name" value="Enolase"/>
</dbReference>
<dbReference type="InterPro" id="IPR036849">
    <property type="entry name" value="Enolase-like_C_sf"/>
</dbReference>
<dbReference type="InterPro" id="IPR029017">
    <property type="entry name" value="Enolase-like_N"/>
</dbReference>
<dbReference type="InterPro" id="IPR020810">
    <property type="entry name" value="Enolase_C"/>
</dbReference>
<dbReference type="InterPro" id="IPR020809">
    <property type="entry name" value="Enolase_CS"/>
</dbReference>
<dbReference type="InterPro" id="IPR020811">
    <property type="entry name" value="Enolase_N"/>
</dbReference>
<dbReference type="NCBIfam" id="TIGR01060">
    <property type="entry name" value="eno"/>
    <property type="match status" value="1"/>
</dbReference>
<dbReference type="PANTHER" id="PTHR11902">
    <property type="entry name" value="ENOLASE"/>
    <property type="match status" value="1"/>
</dbReference>
<dbReference type="PANTHER" id="PTHR11902:SF1">
    <property type="entry name" value="ENOLASE"/>
    <property type="match status" value="1"/>
</dbReference>
<dbReference type="Pfam" id="PF00113">
    <property type="entry name" value="Enolase_C"/>
    <property type="match status" value="1"/>
</dbReference>
<dbReference type="Pfam" id="PF03952">
    <property type="entry name" value="Enolase_N"/>
    <property type="match status" value="1"/>
</dbReference>
<dbReference type="PIRSF" id="PIRSF001400">
    <property type="entry name" value="Enolase"/>
    <property type="match status" value="1"/>
</dbReference>
<dbReference type="PRINTS" id="PR00148">
    <property type="entry name" value="ENOLASE"/>
</dbReference>
<dbReference type="SFLD" id="SFLDF00002">
    <property type="entry name" value="enolase"/>
    <property type="match status" value="1"/>
</dbReference>
<dbReference type="SFLD" id="SFLDG00178">
    <property type="entry name" value="enolase"/>
    <property type="match status" value="1"/>
</dbReference>
<dbReference type="SMART" id="SM01192">
    <property type="entry name" value="Enolase_C"/>
    <property type="match status" value="1"/>
</dbReference>
<dbReference type="SMART" id="SM01193">
    <property type="entry name" value="Enolase_N"/>
    <property type="match status" value="1"/>
</dbReference>
<dbReference type="SUPFAM" id="SSF51604">
    <property type="entry name" value="Enolase C-terminal domain-like"/>
    <property type="match status" value="1"/>
</dbReference>
<dbReference type="SUPFAM" id="SSF54826">
    <property type="entry name" value="Enolase N-terminal domain-like"/>
    <property type="match status" value="1"/>
</dbReference>
<dbReference type="PROSITE" id="PS00164">
    <property type="entry name" value="ENOLASE"/>
    <property type="match status" value="1"/>
</dbReference>
<accession>Q7UIR2</accession>
<feature type="chain" id="PRO_0000133956" description="Enolase">
    <location>
        <begin position="1"/>
        <end position="428"/>
    </location>
</feature>
<feature type="active site" description="Proton donor" evidence="1">
    <location>
        <position position="205"/>
    </location>
</feature>
<feature type="active site" description="Proton acceptor" evidence="1">
    <location>
        <position position="337"/>
    </location>
</feature>
<feature type="binding site" evidence="1">
    <location>
        <position position="163"/>
    </location>
    <ligand>
        <name>(2R)-2-phosphoglycerate</name>
        <dbReference type="ChEBI" id="CHEBI:58289"/>
    </ligand>
</feature>
<feature type="binding site" evidence="1">
    <location>
        <position position="242"/>
    </location>
    <ligand>
        <name>Mg(2+)</name>
        <dbReference type="ChEBI" id="CHEBI:18420"/>
    </ligand>
</feature>
<feature type="binding site" evidence="1">
    <location>
        <position position="285"/>
    </location>
    <ligand>
        <name>Mg(2+)</name>
        <dbReference type="ChEBI" id="CHEBI:18420"/>
    </ligand>
</feature>
<feature type="binding site" evidence="1">
    <location>
        <position position="312"/>
    </location>
    <ligand>
        <name>Mg(2+)</name>
        <dbReference type="ChEBI" id="CHEBI:18420"/>
    </ligand>
</feature>
<feature type="binding site" evidence="1">
    <location>
        <position position="337"/>
    </location>
    <ligand>
        <name>(2R)-2-phosphoglycerate</name>
        <dbReference type="ChEBI" id="CHEBI:58289"/>
    </ligand>
</feature>
<feature type="binding site" evidence="1">
    <location>
        <position position="366"/>
    </location>
    <ligand>
        <name>(2R)-2-phosphoglycerate</name>
        <dbReference type="ChEBI" id="CHEBI:58289"/>
    </ligand>
</feature>
<feature type="binding site" evidence="1">
    <location>
        <position position="367"/>
    </location>
    <ligand>
        <name>(2R)-2-phosphoglycerate</name>
        <dbReference type="ChEBI" id="CHEBI:58289"/>
    </ligand>
</feature>
<feature type="binding site" evidence="1">
    <location>
        <position position="388"/>
    </location>
    <ligand>
        <name>(2R)-2-phosphoglycerate</name>
        <dbReference type="ChEBI" id="CHEBI:58289"/>
    </ligand>
</feature>
<organism>
    <name type="scientific">Rhodopirellula baltica (strain DSM 10527 / NCIMB 13988 / SH1)</name>
    <dbReference type="NCBI Taxonomy" id="243090"/>
    <lineage>
        <taxon>Bacteria</taxon>
        <taxon>Pseudomonadati</taxon>
        <taxon>Planctomycetota</taxon>
        <taxon>Planctomycetia</taxon>
        <taxon>Pirellulales</taxon>
        <taxon>Pirellulaceae</taxon>
        <taxon>Rhodopirellula</taxon>
    </lineage>
</organism>
<keyword id="KW-0963">Cytoplasm</keyword>
<keyword id="KW-0324">Glycolysis</keyword>
<keyword id="KW-0456">Lyase</keyword>
<keyword id="KW-0460">Magnesium</keyword>
<keyword id="KW-0479">Metal-binding</keyword>
<keyword id="KW-1185">Reference proteome</keyword>
<keyword id="KW-0964">Secreted</keyword>
<reference key="1">
    <citation type="journal article" date="2003" name="Proc. Natl. Acad. Sci. U.S.A.">
        <title>Complete genome sequence of the marine planctomycete Pirellula sp. strain 1.</title>
        <authorList>
            <person name="Gloeckner F.O."/>
            <person name="Kube M."/>
            <person name="Bauer M."/>
            <person name="Teeling H."/>
            <person name="Lombardot T."/>
            <person name="Ludwig W."/>
            <person name="Gade D."/>
            <person name="Beck A."/>
            <person name="Borzym K."/>
            <person name="Heitmann K."/>
            <person name="Rabus R."/>
            <person name="Schlesner H."/>
            <person name="Amann R."/>
            <person name="Reinhardt R."/>
        </authorList>
    </citation>
    <scope>NUCLEOTIDE SEQUENCE [LARGE SCALE GENOMIC DNA]</scope>
    <source>
        <strain>DSM 10527 / NCIMB 13988 / SH1</strain>
    </source>
</reference>